<comment type="function">
    <text evidence="1">Catalyzes the reversible reaction in which hydroxymethyl group from 5,10-methylenetetrahydrofolate is transferred onto alpha-ketoisovalerate to form ketopantoate.</text>
</comment>
<comment type="catalytic activity">
    <reaction evidence="1">
        <text>3-methyl-2-oxobutanoate + (6R)-5,10-methylene-5,6,7,8-tetrahydrofolate + H2O = 2-dehydropantoate + (6S)-5,6,7,8-tetrahydrofolate</text>
        <dbReference type="Rhea" id="RHEA:11824"/>
        <dbReference type="ChEBI" id="CHEBI:11561"/>
        <dbReference type="ChEBI" id="CHEBI:11851"/>
        <dbReference type="ChEBI" id="CHEBI:15377"/>
        <dbReference type="ChEBI" id="CHEBI:15636"/>
        <dbReference type="ChEBI" id="CHEBI:57453"/>
        <dbReference type="EC" id="2.1.2.11"/>
    </reaction>
</comment>
<comment type="cofactor">
    <cofactor evidence="1">
        <name>Mg(2+)</name>
        <dbReference type="ChEBI" id="CHEBI:18420"/>
    </cofactor>
    <text evidence="1">Binds 1 Mg(2+) ion per subunit.</text>
</comment>
<comment type="pathway">
    <text evidence="1">Cofactor biosynthesis; (R)-pantothenate biosynthesis; (R)-pantoate from 3-methyl-2-oxobutanoate: step 1/2.</text>
</comment>
<comment type="subunit">
    <text evidence="1">Homodecamer; pentamer of dimers.</text>
</comment>
<comment type="subcellular location">
    <subcellularLocation>
        <location evidence="1">Cytoplasm</location>
    </subcellularLocation>
</comment>
<comment type="similarity">
    <text evidence="1">Belongs to the PanB family.</text>
</comment>
<gene>
    <name evidence="1" type="primary">panB</name>
    <name type="ordered locus">BCE33L1422</name>
</gene>
<feature type="chain" id="PRO_0000184811" description="3-methyl-2-oxobutanoate hydroxymethyltransferase">
    <location>
        <begin position="1"/>
        <end position="279"/>
    </location>
</feature>
<feature type="active site" description="Proton acceptor" evidence="1">
    <location>
        <position position="181"/>
    </location>
</feature>
<feature type="binding site" evidence="1">
    <location>
        <begin position="43"/>
        <end position="44"/>
    </location>
    <ligand>
        <name>3-methyl-2-oxobutanoate</name>
        <dbReference type="ChEBI" id="CHEBI:11851"/>
    </ligand>
</feature>
<feature type="binding site" evidence="1">
    <location>
        <position position="43"/>
    </location>
    <ligand>
        <name>Mg(2+)</name>
        <dbReference type="ChEBI" id="CHEBI:18420"/>
    </ligand>
</feature>
<feature type="binding site" evidence="1">
    <location>
        <position position="82"/>
    </location>
    <ligand>
        <name>3-methyl-2-oxobutanoate</name>
        <dbReference type="ChEBI" id="CHEBI:11851"/>
    </ligand>
</feature>
<feature type="binding site" evidence="1">
    <location>
        <position position="82"/>
    </location>
    <ligand>
        <name>Mg(2+)</name>
        <dbReference type="ChEBI" id="CHEBI:18420"/>
    </ligand>
</feature>
<feature type="binding site" evidence="1">
    <location>
        <position position="112"/>
    </location>
    <ligand>
        <name>3-methyl-2-oxobutanoate</name>
        <dbReference type="ChEBI" id="CHEBI:11851"/>
    </ligand>
</feature>
<feature type="binding site" evidence="1">
    <location>
        <position position="114"/>
    </location>
    <ligand>
        <name>Mg(2+)</name>
        <dbReference type="ChEBI" id="CHEBI:18420"/>
    </ligand>
</feature>
<proteinExistence type="inferred from homology"/>
<name>PANB_BACCZ</name>
<dbReference type="EC" id="2.1.2.11" evidence="1"/>
<dbReference type="EMBL" id="CP000001">
    <property type="protein sequence ID" value="AAU18828.1"/>
    <property type="molecule type" value="Genomic_DNA"/>
</dbReference>
<dbReference type="RefSeq" id="WP_000851103.1">
    <property type="nucleotide sequence ID" value="NZ_CP009968.1"/>
</dbReference>
<dbReference type="SMR" id="Q63DJ3"/>
<dbReference type="GeneID" id="45021534"/>
<dbReference type="KEGG" id="bcz:BCE33L1422"/>
<dbReference type="PATRIC" id="fig|288681.22.peg.4131"/>
<dbReference type="UniPathway" id="UPA00028">
    <property type="reaction ID" value="UER00003"/>
</dbReference>
<dbReference type="Proteomes" id="UP000002612">
    <property type="component" value="Chromosome"/>
</dbReference>
<dbReference type="GO" id="GO:0005737">
    <property type="term" value="C:cytoplasm"/>
    <property type="evidence" value="ECO:0007669"/>
    <property type="project" value="UniProtKB-SubCell"/>
</dbReference>
<dbReference type="GO" id="GO:0003864">
    <property type="term" value="F:3-methyl-2-oxobutanoate hydroxymethyltransferase activity"/>
    <property type="evidence" value="ECO:0007669"/>
    <property type="project" value="UniProtKB-UniRule"/>
</dbReference>
<dbReference type="GO" id="GO:0000287">
    <property type="term" value="F:magnesium ion binding"/>
    <property type="evidence" value="ECO:0007669"/>
    <property type="project" value="TreeGrafter"/>
</dbReference>
<dbReference type="GO" id="GO:0015940">
    <property type="term" value="P:pantothenate biosynthetic process"/>
    <property type="evidence" value="ECO:0007669"/>
    <property type="project" value="UniProtKB-UniRule"/>
</dbReference>
<dbReference type="CDD" id="cd06557">
    <property type="entry name" value="KPHMT-like"/>
    <property type="match status" value="1"/>
</dbReference>
<dbReference type="FunFam" id="3.20.20.60:FF:000003">
    <property type="entry name" value="3-methyl-2-oxobutanoate hydroxymethyltransferase"/>
    <property type="match status" value="1"/>
</dbReference>
<dbReference type="Gene3D" id="3.20.20.60">
    <property type="entry name" value="Phosphoenolpyruvate-binding domains"/>
    <property type="match status" value="1"/>
</dbReference>
<dbReference type="HAMAP" id="MF_00156">
    <property type="entry name" value="PanB"/>
    <property type="match status" value="1"/>
</dbReference>
<dbReference type="InterPro" id="IPR003700">
    <property type="entry name" value="Pantoate_hydroxy_MeTrfase"/>
</dbReference>
<dbReference type="InterPro" id="IPR015813">
    <property type="entry name" value="Pyrv/PenolPyrv_kinase-like_dom"/>
</dbReference>
<dbReference type="InterPro" id="IPR040442">
    <property type="entry name" value="Pyrv_kinase-like_dom_sf"/>
</dbReference>
<dbReference type="NCBIfam" id="TIGR00222">
    <property type="entry name" value="panB"/>
    <property type="match status" value="1"/>
</dbReference>
<dbReference type="NCBIfam" id="NF001452">
    <property type="entry name" value="PRK00311.1"/>
    <property type="match status" value="1"/>
</dbReference>
<dbReference type="PANTHER" id="PTHR20881">
    <property type="entry name" value="3-METHYL-2-OXOBUTANOATE HYDROXYMETHYLTRANSFERASE"/>
    <property type="match status" value="1"/>
</dbReference>
<dbReference type="PANTHER" id="PTHR20881:SF0">
    <property type="entry name" value="3-METHYL-2-OXOBUTANOATE HYDROXYMETHYLTRANSFERASE"/>
    <property type="match status" value="1"/>
</dbReference>
<dbReference type="Pfam" id="PF02548">
    <property type="entry name" value="Pantoate_transf"/>
    <property type="match status" value="1"/>
</dbReference>
<dbReference type="PIRSF" id="PIRSF000388">
    <property type="entry name" value="Pantoate_hydroxy_MeTrfase"/>
    <property type="match status" value="1"/>
</dbReference>
<dbReference type="SUPFAM" id="SSF51621">
    <property type="entry name" value="Phosphoenolpyruvate/pyruvate domain"/>
    <property type="match status" value="1"/>
</dbReference>
<sequence length="279" mass="30535">MKTKTDFLKMKEQGEPITMLTAYDYPSAKLAEEAEVDMILVGDSLGMVVLGYDSTVPVTVEDMIHHTKAVRRGAKETFIVTDMPFMSYHVSLQDTMVNARRIVQESGAHALKVEGAGEVISTIHYLTNAGIPVVAHLGLTPQSVGVLGGYKVQGKDAESAKKLIEDAKKCEEAGAIALVLECVPMQLAELISEQLTIPTIGIGAGQKVDGQVLVYHDLISYGVNRVPKFVKQYTSVQEEIVRGISQYVAEVKTRQFPEEKHSFTMKEEECLALYGGKQS</sequence>
<evidence type="ECO:0000255" key="1">
    <source>
        <dbReference type="HAMAP-Rule" id="MF_00156"/>
    </source>
</evidence>
<reference key="1">
    <citation type="journal article" date="2006" name="J. Bacteriol.">
        <title>Pathogenomic sequence analysis of Bacillus cereus and Bacillus thuringiensis isolates closely related to Bacillus anthracis.</title>
        <authorList>
            <person name="Han C.S."/>
            <person name="Xie G."/>
            <person name="Challacombe J.F."/>
            <person name="Altherr M.R."/>
            <person name="Bhotika S.S."/>
            <person name="Bruce D."/>
            <person name="Campbell C.S."/>
            <person name="Campbell M.L."/>
            <person name="Chen J."/>
            <person name="Chertkov O."/>
            <person name="Cleland C."/>
            <person name="Dimitrijevic M."/>
            <person name="Doggett N.A."/>
            <person name="Fawcett J.J."/>
            <person name="Glavina T."/>
            <person name="Goodwin L.A."/>
            <person name="Hill K.K."/>
            <person name="Hitchcock P."/>
            <person name="Jackson P.J."/>
            <person name="Keim P."/>
            <person name="Kewalramani A.R."/>
            <person name="Longmire J."/>
            <person name="Lucas S."/>
            <person name="Malfatti S."/>
            <person name="McMurry K."/>
            <person name="Meincke L.J."/>
            <person name="Misra M."/>
            <person name="Moseman B.L."/>
            <person name="Mundt M."/>
            <person name="Munk A.C."/>
            <person name="Okinaka R.T."/>
            <person name="Parson-Quintana B."/>
            <person name="Reilly L.P."/>
            <person name="Richardson P."/>
            <person name="Robinson D.L."/>
            <person name="Rubin E."/>
            <person name="Saunders E."/>
            <person name="Tapia R."/>
            <person name="Tesmer J.G."/>
            <person name="Thayer N."/>
            <person name="Thompson L.S."/>
            <person name="Tice H."/>
            <person name="Ticknor L.O."/>
            <person name="Wills P.L."/>
            <person name="Brettin T.S."/>
            <person name="Gilna P."/>
        </authorList>
    </citation>
    <scope>NUCLEOTIDE SEQUENCE [LARGE SCALE GENOMIC DNA]</scope>
    <source>
        <strain>ZK / E33L</strain>
    </source>
</reference>
<protein>
    <recommendedName>
        <fullName evidence="1">3-methyl-2-oxobutanoate hydroxymethyltransferase</fullName>
        <ecNumber evidence="1">2.1.2.11</ecNumber>
    </recommendedName>
    <alternativeName>
        <fullName evidence="1">Ketopantoate hydroxymethyltransferase</fullName>
        <shortName evidence="1">KPHMT</shortName>
    </alternativeName>
</protein>
<accession>Q63DJ3</accession>
<organism>
    <name type="scientific">Bacillus cereus (strain ZK / E33L)</name>
    <dbReference type="NCBI Taxonomy" id="288681"/>
    <lineage>
        <taxon>Bacteria</taxon>
        <taxon>Bacillati</taxon>
        <taxon>Bacillota</taxon>
        <taxon>Bacilli</taxon>
        <taxon>Bacillales</taxon>
        <taxon>Bacillaceae</taxon>
        <taxon>Bacillus</taxon>
        <taxon>Bacillus cereus group</taxon>
    </lineage>
</organism>
<keyword id="KW-0963">Cytoplasm</keyword>
<keyword id="KW-0460">Magnesium</keyword>
<keyword id="KW-0479">Metal-binding</keyword>
<keyword id="KW-0566">Pantothenate biosynthesis</keyword>
<keyword id="KW-0808">Transferase</keyword>